<feature type="chain" id="PRO_0000159142" description="Polyferredoxin protein MvhB">
    <location>
        <begin position="1"/>
        <end position="412"/>
    </location>
</feature>
<feature type="domain" description="4Fe-4S ferredoxin-type 1" evidence="2">
    <location>
        <begin position="2"/>
        <end position="29"/>
    </location>
</feature>
<feature type="domain" description="4Fe-4S ferredoxin-type 2" evidence="2">
    <location>
        <begin position="30"/>
        <end position="57"/>
    </location>
</feature>
<feature type="domain" description="4Fe-4S ferredoxin-type 3" evidence="2">
    <location>
        <begin position="66"/>
        <end position="95"/>
    </location>
</feature>
<feature type="domain" description="4Fe-4S ferredoxin-type 4" evidence="2">
    <location>
        <begin position="96"/>
        <end position="127"/>
    </location>
</feature>
<feature type="domain" description="4Fe-4S ferredoxin-type 5" evidence="2">
    <location>
        <begin position="138"/>
        <end position="166"/>
    </location>
</feature>
<feature type="domain" description="4Fe-4S ferredoxin-type 6" evidence="2">
    <location>
        <begin position="168"/>
        <end position="197"/>
    </location>
</feature>
<feature type="domain" description="4Fe-4S ferredoxin-type 7" evidence="2">
    <location>
        <begin position="207"/>
        <end position="236"/>
    </location>
</feature>
<feature type="domain" description="4Fe-4S ferredoxin-type 8" evidence="2">
    <location>
        <begin position="237"/>
        <end position="265"/>
    </location>
</feature>
<feature type="domain" description="4Fe-4S ferredoxin-type 9" evidence="2">
    <location>
        <begin position="275"/>
        <end position="304"/>
    </location>
</feature>
<feature type="domain" description="4Fe-4S ferredoxin-type 10" evidence="2">
    <location>
        <begin position="311"/>
        <end position="344"/>
    </location>
</feature>
<feature type="domain" description="4Fe-4S ferredoxin-type 11" evidence="2">
    <location>
        <begin position="356"/>
        <end position="385"/>
    </location>
</feature>
<feature type="domain" description="4Fe-4S ferredoxin-type 12" evidence="2">
    <location>
        <begin position="386"/>
        <end position="412"/>
    </location>
</feature>
<feature type="binding site" evidence="1">
    <location>
        <position position="9"/>
    </location>
    <ligand>
        <name>[4Fe-4S] cluster</name>
        <dbReference type="ChEBI" id="CHEBI:49883"/>
    </ligand>
</feature>
<feature type="binding site" evidence="1">
    <location>
        <position position="12"/>
    </location>
    <ligand>
        <name>[4Fe-4S] cluster</name>
        <dbReference type="ChEBI" id="CHEBI:49883"/>
    </ligand>
</feature>
<feature type="binding site" evidence="1">
    <location>
        <position position="15"/>
    </location>
    <ligand>
        <name>[4Fe-4S] cluster</name>
        <dbReference type="ChEBI" id="CHEBI:49883"/>
    </ligand>
</feature>
<feature type="binding site" evidence="1">
    <location>
        <position position="19"/>
    </location>
    <ligand>
        <name>[4Fe-4S] cluster</name>
        <dbReference type="ChEBI" id="CHEBI:49883"/>
    </ligand>
</feature>
<feature type="binding site" evidence="1">
    <location>
        <position position="75"/>
    </location>
    <ligand>
        <name>[4Fe-4S] cluster</name>
        <dbReference type="ChEBI" id="CHEBI:49883"/>
    </ligand>
</feature>
<feature type="binding site" evidence="1">
    <location>
        <position position="78"/>
    </location>
    <ligand>
        <name>[4Fe-4S] cluster</name>
        <dbReference type="ChEBI" id="CHEBI:49883"/>
    </ligand>
</feature>
<feature type="binding site" evidence="1">
    <location>
        <position position="81"/>
    </location>
    <ligand>
        <name>[4Fe-4S] cluster</name>
        <dbReference type="ChEBI" id="CHEBI:49883"/>
    </ligand>
</feature>
<feature type="binding site" evidence="1">
    <location>
        <position position="85"/>
    </location>
    <ligand>
        <name>[4Fe-4S] cluster</name>
        <dbReference type="ChEBI" id="CHEBI:49883"/>
    </ligand>
</feature>
<feature type="binding site" evidence="1">
    <location>
        <position position="107"/>
    </location>
    <ligand>
        <name>[4Fe-4S] cluster</name>
        <dbReference type="ChEBI" id="CHEBI:49883"/>
    </ligand>
</feature>
<feature type="binding site" evidence="1">
    <location>
        <position position="110"/>
    </location>
    <ligand>
        <name>[4Fe-4S] cluster</name>
        <dbReference type="ChEBI" id="CHEBI:49883"/>
    </ligand>
</feature>
<feature type="binding site" evidence="1">
    <location>
        <position position="113"/>
    </location>
    <ligand>
        <name>[4Fe-4S] cluster</name>
        <dbReference type="ChEBI" id="CHEBI:49883"/>
    </ligand>
</feature>
<feature type="binding site" evidence="1">
    <location>
        <position position="117"/>
    </location>
    <ligand>
        <name>[4Fe-4S] cluster</name>
        <dbReference type="ChEBI" id="CHEBI:49883"/>
    </ligand>
</feature>
<feature type="binding site" evidence="1">
    <location>
        <position position="146"/>
    </location>
    <ligand>
        <name>[4Fe-4S] cluster</name>
        <dbReference type="ChEBI" id="CHEBI:49883"/>
    </ligand>
</feature>
<feature type="binding site" evidence="1">
    <location>
        <position position="149"/>
    </location>
    <ligand>
        <name>[4Fe-4S] cluster</name>
        <dbReference type="ChEBI" id="CHEBI:49883"/>
    </ligand>
</feature>
<feature type="binding site" evidence="1">
    <location>
        <position position="152"/>
    </location>
    <ligand>
        <name>[4Fe-4S] cluster</name>
        <dbReference type="ChEBI" id="CHEBI:49883"/>
    </ligand>
</feature>
<feature type="binding site" evidence="1">
    <location>
        <position position="156"/>
    </location>
    <ligand>
        <name>[4Fe-4S] cluster</name>
        <dbReference type="ChEBI" id="CHEBI:49883"/>
    </ligand>
</feature>
<feature type="binding site" evidence="1">
    <location>
        <position position="177"/>
    </location>
    <ligand>
        <name>[4Fe-4S] cluster</name>
        <dbReference type="ChEBI" id="CHEBI:49883"/>
    </ligand>
</feature>
<feature type="binding site" evidence="1">
    <location>
        <position position="180"/>
    </location>
    <ligand>
        <name>[4Fe-4S] cluster</name>
        <dbReference type="ChEBI" id="CHEBI:49883"/>
    </ligand>
</feature>
<feature type="binding site" evidence="1">
    <location>
        <position position="183"/>
    </location>
    <ligand>
        <name>[4Fe-4S] cluster</name>
        <dbReference type="ChEBI" id="CHEBI:49883"/>
    </ligand>
</feature>
<feature type="binding site" evidence="1">
    <location>
        <position position="187"/>
    </location>
    <ligand>
        <name>[4Fe-4S] cluster</name>
        <dbReference type="ChEBI" id="CHEBI:49883"/>
    </ligand>
</feature>
<feature type="binding site" evidence="1">
    <location>
        <position position="216"/>
    </location>
    <ligand>
        <name>[4Fe-4S] cluster</name>
        <dbReference type="ChEBI" id="CHEBI:49883"/>
    </ligand>
</feature>
<feature type="binding site" evidence="1">
    <location>
        <position position="219"/>
    </location>
    <ligand>
        <name>[4Fe-4S] cluster</name>
        <dbReference type="ChEBI" id="CHEBI:49883"/>
    </ligand>
</feature>
<feature type="binding site" evidence="1">
    <location>
        <position position="222"/>
    </location>
    <ligand>
        <name>[4Fe-4S] cluster</name>
        <dbReference type="ChEBI" id="CHEBI:49883"/>
    </ligand>
</feature>
<feature type="binding site" evidence="1">
    <location>
        <position position="226"/>
    </location>
    <ligand>
        <name>[4Fe-4S] cluster</name>
        <dbReference type="ChEBI" id="CHEBI:49883"/>
    </ligand>
</feature>
<feature type="binding site" evidence="1">
    <location>
        <position position="245"/>
    </location>
    <ligand>
        <name>[4Fe-4S] cluster</name>
        <dbReference type="ChEBI" id="CHEBI:49883"/>
    </ligand>
</feature>
<feature type="binding site" evidence="1">
    <location>
        <position position="248"/>
    </location>
    <ligand>
        <name>[4Fe-4S] cluster</name>
        <dbReference type="ChEBI" id="CHEBI:49883"/>
    </ligand>
</feature>
<feature type="binding site" evidence="1">
    <location>
        <position position="251"/>
    </location>
    <ligand>
        <name>[4Fe-4S] cluster</name>
        <dbReference type="ChEBI" id="CHEBI:49883"/>
    </ligand>
</feature>
<feature type="binding site" evidence="1">
    <location>
        <position position="255"/>
    </location>
    <ligand>
        <name>[4Fe-4S] cluster</name>
        <dbReference type="ChEBI" id="CHEBI:49883"/>
    </ligand>
</feature>
<feature type="binding site" evidence="1">
    <location>
        <position position="284"/>
    </location>
    <ligand>
        <name>[4Fe-4S] cluster</name>
        <dbReference type="ChEBI" id="CHEBI:49883"/>
    </ligand>
</feature>
<feature type="binding site" evidence="1">
    <location>
        <position position="287"/>
    </location>
    <ligand>
        <name>[4Fe-4S] cluster</name>
        <dbReference type="ChEBI" id="CHEBI:49883"/>
    </ligand>
</feature>
<feature type="binding site" evidence="1">
    <location>
        <position position="290"/>
    </location>
    <ligand>
        <name>[4Fe-4S] cluster</name>
        <dbReference type="ChEBI" id="CHEBI:49883"/>
    </ligand>
</feature>
<feature type="binding site" evidence="1">
    <location>
        <position position="294"/>
    </location>
    <ligand>
        <name>[4Fe-4S] cluster</name>
        <dbReference type="ChEBI" id="CHEBI:49883"/>
    </ligand>
</feature>
<feature type="binding site" evidence="1">
    <location>
        <position position="324"/>
    </location>
    <ligand>
        <name>[4Fe-4S] cluster</name>
        <dbReference type="ChEBI" id="CHEBI:49883"/>
    </ligand>
</feature>
<feature type="binding site" evidence="1">
    <location>
        <position position="327"/>
    </location>
    <ligand>
        <name>[4Fe-4S] cluster</name>
        <dbReference type="ChEBI" id="CHEBI:49883"/>
    </ligand>
</feature>
<feature type="binding site" evidence="1">
    <location>
        <position position="330"/>
    </location>
    <ligand>
        <name>[4Fe-4S] cluster</name>
        <dbReference type="ChEBI" id="CHEBI:49883"/>
    </ligand>
</feature>
<feature type="binding site" evidence="1">
    <location>
        <position position="334"/>
    </location>
    <ligand>
        <name>[4Fe-4S] cluster</name>
        <dbReference type="ChEBI" id="CHEBI:49883"/>
    </ligand>
</feature>
<feature type="binding site" evidence="1">
    <location>
        <position position="365"/>
    </location>
    <ligand>
        <name>[4Fe-4S] cluster</name>
        <dbReference type="ChEBI" id="CHEBI:49883"/>
    </ligand>
</feature>
<feature type="binding site" evidence="1">
    <location>
        <position position="368"/>
    </location>
    <ligand>
        <name>[4Fe-4S] cluster</name>
        <dbReference type="ChEBI" id="CHEBI:49883"/>
    </ligand>
</feature>
<feature type="binding site" evidence="1">
    <location>
        <position position="371"/>
    </location>
    <ligand>
        <name>[4Fe-4S] cluster</name>
        <dbReference type="ChEBI" id="CHEBI:49883"/>
    </ligand>
</feature>
<feature type="binding site" evidence="1">
    <location>
        <position position="375"/>
    </location>
    <ligand>
        <name>[4Fe-4S] cluster</name>
        <dbReference type="ChEBI" id="CHEBI:49883"/>
    </ligand>
</feature>
<organism>
    <name type="scientific">Methanothermus fervidus</name>
    <dbReference type="NCBI Taxonomy" id="2180"/>
    <lineage>
        <taxon>Archaea</taxon>
        <taxon>Methanobacteriati</taxon>
        <taxon>Methanobacteriota</taxon>
        <taxon>Methanomada group</taxon>
        <taxon>Methanobacteria</taxon>
        <taxon>Methanobacteriales</taxon>
        <taxon>Methanothermaceae</taxon>
        <taxon>Methanothermus</taxon>
    </lineage>
</organism>
<sequence length="412" mass="44642">MIVINKEDCIRCGACQGVCPTGAISVKPEDVIYCDMCGGEPKCVEACPNDALRHEDITLEGGIKKKKITYSPEKCDKCGECVKVCPPGILKLVNDGKASRVPLEGFCVLCQQCVNVCPIEVIGIEGVKEPARVEIKIDKPIYIVDCVGCGLCVPECPVNAITLPKYGESIEIDEEKCIKCGICAQTCPWNSVYISGKKPQKSSRTIENFTLDKEECIGCNTCVEICPGGFIEPKSDLTVSLPEICPACGLCEKLCPTDAIELEVKLGPAKPVTEEGIVYNDENCKFCGRCALNCPNEAIRVVSPKGRVFPGLKKVDEKESYTICTTCGACTTVCPTGALKLVEVSKKVNGETVKRNRIQYNPSLCDKCGNCVDVCPYGILKLTDDEKLPVKGFCILCEKCIDACRFNALLIK</sequence>
<reference key="1">
    <citation type="journal article" date="1990" name="J. Bacteriol.">
        <title>Conservation of hydrogenase and polyferredoxin structures in the hyperthermophilic archaebacterium Methanothermus fervidus.</title>
        <authorList>
            <person name="Steigerwald V.J."/>
            <person name="Beckler G.S."/>
            <person name="Reeve J.N."/>
        </authorList>
    </citation>
    <scope>NUCLEOTIDE SEQUENCE [GENOMIC DNA]</scope>
</reference>
<name>MVHB_METFE</name>
<proteinExistence type="predicted"/>
<protein>
    <recommendedName>
        <fullName>Polyferredoxin protein MvhB</fullName>
    </recommendedName>
</protein>
<evidence type="ECO:0000255" key="1"/>
<evidence type="ECO:0000255" key="2">
    <source>
        <dbReference type="PROSITE-ProRule" id="PRU00711"/>
    </source>
</evidence>
<evidence type="ECO:0000305" key="3"/>
<keyword id="KW-0004">4Fe-4S</keyword>
<keyword id="KW-0408">Iron</keyword>
<keyword id="KW-0411">Iron-sulfur</keyword>
<keyword id="KW-0479">Metal-binding</keyword>
<keyword id="KW-0677">Repeat</keyword>
<accession>Q49180</accession>
<gene>
    <name type="primary">mvhB</name>
</gene>
<dbReference type="EMBL" id="M34016">
    <property type="protein sequence ID" value="AAA72833.1"/>
    <property type="molecule type" value="Genomic_DNA"/>
</dbReference>
<dbReference type="PIR" id="C37777">
    <property type="entry name" value="C37777"/>
</dbReference>
<dbReference type="GO" id="GO:0051539">
    <property type="term" value="F:4 iron, 4 sulfur cluster binding"/>
    <property type="evidence" value="ECO:0007669"/>
    <property type="project" value="UniProtKB-KW"/>
</dbReference>
<dbReference type="GO" id="GO:0009055">
    <property type="term" value="F:electron transfer activity"/>
    <property type="evidence" value="ECO:0007669"/>
    <property type="project" value="InterPro"/>
</dbReference>
<dbReference type="GO" id="GO:0005506">
    <property type="term" value="F:iron ion binding"/>
    <property type="evidence" value="ECO:0007669"/>
    <property type="project" value="InterPro"/>
</dbReference>
<dbReference type="GO" id="GO:0016491">
    <property type="term" value="F:oxidoreductase activity"/>
    <property type="evidence" value="ECO:0007669"/>
    <property type="project" value="UniProtKB-ARBA"/>
</dbReference>
<dbReference type="CDD" id="cd10549">
    <property type="entry name" value="MtMvhB_like"/>
    <property type="match status" value="3"/>
</dbReference>
<dbReference type="Gene3D" id="3.30.70.20">
    <property type="match status" value="7"/>
</dbReference>
<dbReference type="InterPro" id="IPR001080">
    <property type="entry name" value="3Fe4S_ferredoxin"/>
</dbReference>
<dbReference type="InterPro" id="IPR017896">
    <property type="entry name" value="4Fe4S_Fe-S-bd"/>
</dbReference>
<dbReference type="InterPro" id="IPR017900">
    <property type="entry name" value="4Fe4S_Fe_S_CS"/>
</dbReference>
<dbReference type="InterPro" id="IPR050572">
    <property type="entry name" value="Fe-S_Ferredoxin"/>
</dbReference>
<dbReference type="PANTHER" id="PTHR43687">
    <property type="entry name" value="ADENYLYLSULFATE REDUCTASE, BETA SUBUNIT"/>
    <property type="match status" value="1"/>
</dbReference>
<dbReference type="PANTHER" id="PTHR43687:SF1">
    <property type="entry name" value="FERREDOXIN III"/>
    <property type="match status" value="1"/>
</dbReference>
<dbReference type="Pfam" id="PF00037">
    <property type="entry name" value="Fer4"/>
    <property type="match status" value="2"/>
</dbReference>
<dbReference type="Pfam" id="PF12800">
    <property type="entry name" value="Fer4_4"/>
    <property type="match status" value="2"/>
</dbReference>
<dbReference type="Pfam" id="PF12838">
    <property type="entry name" value="Fer4_7"/>
    <property type="match status" value="4"/>
</dbReference>
<dbReference type="PRINTS" id="PR00352">
    <property type="entry name" value="3FE4SFRDOXIN"/>
</dbReference>
<dbReference type="SUPFAM" id="SSF54862">
    <property type="entry name" value="4Fe-4S ferredoxins"/>
    <property type="match status" value="4"/>
</dbReference>
<dbReference type="PROSITE" id="PS00198">
    <property type="entry name" value="4FE4S_FER_1"/>
    <property type="match status" value="10"/>
</dbReference>
<dbReference type="PROSITE" id="PS51379">
    <property type="entry name" value="4FE4S_FER_2"/>
    <property type="match status" value="12"/>
</dbReference>
<comment type="cofactor">
    <cofactor evidence="3">
        <name>[4Fe-4S] cluster</name>
        <dbReference type="ChEBI" id="CHEBI:49883"/>
    </cofactor>
    <text evidence="3">Binds 10 [4Fe-4S] clusters.</text>
</comment>